<reference key="1">
    <citation type="journal article" date="2003" name="Lancet">
        <title>Genome sequence of Vibrio parahaemolyticus: a pathogenic mechanism distinct from that of V. cholerae.</title>
        <authorList>
            <person name="Makino K."/>
            <person name="Oshima K."/>
            <person name="Kurokawa K."/>
            <person name="Yokoyama K."/>
            <person name="Uda T."/>
            <person name="Tagomori K."/>
            <person name="Iijima Y."/>
            <person name="Najima M."/>
            <person name="Nakano M."/>
            <person name="Yamashita A."/>
            <person name="Kubota Y."/>
            <person name="Kimura S."/>
            <person name="Yasunaga T."/>
            <person name="Honda T."/>
            <person name="Shinagawa H."/>
            <person name="Hattori M."/>
            <person name="Iida T."/>
        </authorList>
    </citation>
    <scope>NUCLEOTIDE SEQUENCE [LARGE SCALE GENOMIC DNA]</scope>
    <source>
        <strain>RIMD 2210633</strain>
    </source>
</reference>
<organism>
    <name type="scientific">Vibrio parahaemolyticus serotype O3:K6 (strain RIMD 2210633)</name>
    <dbReference type="NCBI Taxonomy" id="223926"/>
    <lineage>
        <taxon>Bacteria</taxon>
        <taxon>Pseudomonadati</taxon>
        <taxon>Pseudomonadota</taxon>
        <taxon>Gammaproteobacteria</taxon>
        <taxon>Vibrionales</taxon>
        <taxon>Vibrionaceae</taxon>
        <taxon>Vibrio</taxon>
    </lineage>
</organism>
<sequence>MKVELTAIEARVIGCLIEKEVTTPDQYPLSLNALTNASNQKSNREPVMALSESDVLDAVDALIERRLVSDESAFNSRVSKYQHRFCNTEFGDLKLSEQEKGIICCMLLRGAQTPGEIRTRTNRLATFHDVKEVEAVLEHLASEEKGPLVVKLPREAGKRESRYMHLFCGEVDVSAMAAAVPATSSSSVRIAQLEQEVAELREELDALKAQVESLLS</sequence>
<name>Y5223_VIBPA</name>
<evidence type="ECO:0000255" key="1">
    <source>
        <dbReference type="HAMAP-Rule" id="MF_01584"/>
    </source>
</evidence>
<proteinExistence type="inferred from homology"/>
<gene>
    <name type="ordered locus">VPA1223</name>
</gene>
<dbReference type="EMBL" id="BA000032">
    <property type="protein sequence ID" value="BAC62566.1"/>
    <property type="molecule type" value="Genomic_DNA"/>
</dbReference>
<dbReference type="RefSeq" id="NP_800733.1">
    <property type="nucleotide sequence ID" value="NC_004605.1"/>
</dbReference>
<dbReference type="RefSeq" id="WP_005477153.1">
    <property type="nucleotide sequence ID" value="NC_004605.1"/>
</dbReference>
<dbReference type="SMR" id="Q87GU2"/>
<dbReference type="GeneID" id="1191919"/>
<dbReference type="KEGG" id="vpa:VPA1223"/>
<dbReference type="PATRIC" id="fig|223926.6.peg.4151"/>
<dbReference type="eggNOG" id="COG3132">
    <property type="taxonomic scope" value="Bacteria"/>
</dbReference>
<dbReference type="HOGENOM" id="CLU_057831_2_0_6"/>
<dbReference type="Proteomes" id="UP000002493">
    <property type="component" value="Chromosome 2"/>
</dbReference>
<dbReference type="Gene3D" id="1.10.10.10">
    <property type="entry name" value="Winged helix-like DNA-binding domain superfamily/Winged helix DNA-binding domain"/>
    <property type="match status" value="2"/>
</dbReference>
<dbReference type="HAMAP" id="MF_01584">
    <property type="entry name" value="UPF0502"/>
    <property type="match status" value="1"/>
</dbReference>
<dbReference type="InterPro" id="IPR007432">
    <property type="entry name" value="DUF480"/>
</dbReference>
<dbReference type="InterPro" id="IPR036388">
    <property type="entry name" value="WH-like_DNA-bd_sf"/>
</dbReference>
<dbReference type="InterPro" id="IPR036390">
    <property type="entry name" value="WH_DNA-bd_sf"/>
</dbReference>
<dbReference type="PANTHER" id="PTHR38768">
    <property type="entry name" value="UPF0502 PROTEIN YCEH"/>
    <property type="match status" value="1"/>
</dbReference>
<dbReference type="PANTHER" id="PTHR38768:SF1">
    <property type="entry name" value="UPF0502 PROTEIN YCEH"/>
    <property type="match status" value="1"/>
</dbReference>
<dbReference type="Pfam" id="PF04337">
    <property type="entry name" value="DUF480"/>
    <property type="match status" value="1"/>
</dbReference>
<dbReference type="SUPFAM" id="SSF46785">
    <property type="entry name" value="Winged helix' DNA-binding domain"/>
    <property type="match status" value="2"/>
</dbReference>
<feature type="chain" id="PRO_0000309441" description="UPF0502 protein VPA1223">
    <location>
        <begin position="1"/>
        <end position="216"/>
    </location>
</feature>
<comment type="similarity">
    <text evidence="1">Belongs to the UPF0502 family.</text>
</comment>
<accession>Q87GU2</accession>
<protein>
    <recommendedName>
        <fullName evidence="1">UPF0502 protein VPA1223</fullName>
    </recommendedName>
</protein>